<proteinExistence type="evidence at protein level"/>
<organism>
    <name type="scientific">Homo sapiens</name>
    <name type="common">Human</name>
    <dbReference type="NCBI Taxonomy" id="9606"/>
    <lineage>
        <taxon>Eukaryota</taxon>
        <taxon>Metazoa</taxon>
        <taxon>Chordata</taxon>
        <taxon>Craniata</taxon>
        <taxon>Vertebrata</taxon>
        <taxon>Euteleostomi</taxon>
        <taxon>Mammalia</taxon>
        <taxon>Eutheria</taxon>
        <taxon>Euarchontoglires</taxon>
        <taxon>Primates</taxon>
        <taxon>Haplorrhini</taxon>
        <taxon>Catarrhini</taxon>
        <taxon>Hominidae</taxon>
        <taxon>Homo</taxon>
    </lineage>
</organism>
<protein>
    <recommendedName>
        <fullName>Nucleoplasmin-2</fullName>
    </recommendedName>
</protein>
<sequence>MNLSSASSTEEKAVTTVLWGCELSQERRTWTFRPQLEGKQSCRLLLHTICLGEKAKEEMHRVEILPPANQEDKKMQPVTIASLQASVLPMVSMVGVQLSPPVTFQLRAGSGPVFLSGQERYEASDLTWEEEEEEEGEEEEEEEEDDEDEDADISLEEQSPVKQVKRLVPQKQASVAKKKKLEKEEEEIRASVRDKSPVKKAKATARAKKPGFKK</sequence>
<gene>
    <name type="primary">NPM2</name>
</gene>
<keyword id="KW-0002">3D-structure</keyword>
<keyword id="KW-0025">Alternative splicing</keyword>
<keyword id="KW-0143">Chaperone</keyword>
<keyword id="KW-0156">Chromatin regulator</keyword>
<keyword id="KW-0217">Developmental protein</keyword>
<keyword id="KW-0278">Fertilization</keyword>
<keyword id="KW-0539">Nucleus</keyword>
<keyword id="KW-1267">Proteomics identification</keyword>
<keyword id="KW-1185">Reference proteome</keyword>
<dbReference type="EMBL" id="AY262113">
    <property type="protein sequence ID" value="AAP33134.1"/>
    <property type="molecule type" value="mRNA"/>
</dbReference>
<dbReference type="EMBL" id="AY262114">
    <property type="protein sequence ID" value="AAP33135.1"/>
    <property type="molecule type" value="mRNA"/>
</dbReference>
<dbReference type="EMBL" id="AK094267">
    <property type="protein sequence ID" value="BAG52852.1"/>
    <property type="molecule type" value="mRNA"/>
</dbReference>
<dbReference type="EMBL" id="AC091171">
    <property type="status" value="NOT_ANNOTATED_CDS"/>
    <property type="molecule type" value="Genomic_DNA"/>
</dbReference>
<dbReference type="EMBL" id="CH471080">
    <property type="protein sequence ID" value="EAW63731.1"/>
    <property type="molecule type" value="Genomic_DNA"/>
</dbReference>
<dbReference type="EMBL" id="CH471080">
    <property type="protein sequence ID" value="EAW63732.1"/>
    <property type="molecule type" value="Genomic_DNA"/>
</dbReference>
<dbReference type="EMBL" id="BC068078">
    <property type="protein sequence ID" value="AAH68078.1"/>
    <property type="molecule type" value="mRNA"/>
</dbReference>
<dbReference type="CCDS" id="CCDS6018.1">
    <molecule id="Q86SE8-1"/>
</dbReference>
<dbReference type="CCDS" id="CCDS75703.1">
    <molecule id="Q86SE8-2"/>
</dbReference>
<dbReference type="RefSeq" id="NP_001273609.1">
    <molecule id="Q86SE8-1"/>
    <property type="nucleotide sequence ID" value="NM_001286680.2"/>
</dbReference>
<dbReference type="RefSeq" id="NP_001273610.1">
    <molecule id="Q86SE8-2"/>
    <property type="nucleotide sequence ID" value="NM_001286681.2"/>
</dbReference>
<dbReference type="RefSeq" id="NP_001400042.1">
    <molecule id="Q86SE8-1"/>
    <property type="nucleotide sequence ID" value="NM_001413113.1"/>
</dbReference>
<dbReference type="RefSeq" id="NP_001400045.1">
    <molecule id="Q86SE8-1"/>
    <property type="nucleotide sequence ID" value="NM_001413116.1"/>
</dbReference>
<dbReference type="RefSeq" id="NP_001400050.1">
    <molecule id="Q86SE8-2"/>
    <property type="nucleotide sequence ID" value="NM_001413121.1"/>
</dbReference>
<dbReference type="RefSeq" id="NP_877724.1">
    <molecule id="Q86SE8-1"/>
    <property type="nucleotide sequence ID" value="NM_182795.2"/>
</dbReference>
<dbReference type="RefSeq" id="XP_011542664.1">
    <property type="nucleotide sequence ID" value="XM_011544362.2"/>
</dbReference>
<dbReference type="RefSeq" id="XP_011542665.1">
    <property type="nucleotide sequence ID" value="XM_011544363.2"/>
</dbReference>
<dbReference type="RefSeq" id="XP_016868437.1">
    <property type="nucleotide sequence ID" value="XM_017012948.1"/>
</dbReference>
<dbReference type="RefSeq" id="XP_016868438.1">
    <property type="nucleotide sequence ID" value="XM_017012949.1"/>
</dbReference>
<dbReference type="RefSeq" id="XP_047277176.1">
    <molecule id="Q86SE8-1"/>
    <property type="nucleotide sequence ID" value="XM_047421220.1"/>
</dbReference>
<dbReference type="RefSeq" id="XP_054215510.1">
    <molecule id="Q86SE8-1"/>
    <property type="nucleotide sequence ID" value="XM_054359535.1"/>
</dbReference>
<dbReference type="PDB" id="3T30">
    <property type="method" value="X-ray"/>
    <property type="resolution" value="1.90 A"/>
    <property type="chains" value="A/B/C/D/E/F/G/H/I/J=14-122"/>
</dbReference>
<dbReference type="PDBsum" id="3T30"/>
<dbReference type="SMR" id="Q86SE8"/>
<dbReference type="BioGRID" id="115641">
    <property type="interactions" value="12"/>
</dbReference>
<dbReference type="FunCoup" id="Q86SE8">
    <property type="interactions" value="1497"/>
</dbReference>
<dbReference type="IntAct" id="Q86SE8">
    <property type="interactions" value="13"/>
</dbReference>
<dbReference type="STRING" id="9606.ENSP00000381032"/>
<dbReference type="GlyGen" id="Q86SE8">
    <property type="glycosylation" value="1 site, 1 O-linked glycan (1 site)"/>
</dbReference>
<dbReference type="iPTMnet" id="Q86SE8"/>
<dbReference type="PhosphoSitePlus" id="Q86SE8"/>
<dbReference type="BioMuta" id="NPM2"/>
<dbReference type="DMDM" id="37537936"/>
<dbReference type="jPOST" id="Q86SE8"/>
<dbReference type="MassIVE" id="Q86SE8"/>
<dbReference type="PaxDb" id="9606-ENSP00000381032"/>
<dbReference type="PeptideAtlas" id="Q86SE8"/>
<dbReference type="ProteomicsDB" id="66718"/>
<dbReference type="ProteomicsDB" id="69576">
    <molecule id="Q86SE8-1"/>
</dbReference>
<dbReference type="Antibodypedia" id="22452">
    <property type="antibodies" value="87 antibodies from 22 providers"/>
</dbReference>
<dbReference type="DNASU" id="10361"/>
<dbReference type="Ensembl" id="ENST00000289820.10">
    <molecule id="Q86SE8-1"/>
    <property type="protein sequence ID" value="ENSP00000289820.6"/>
    <property type="gene ID" value="ENSG00000158806.14"/>
</dbReference>
<dbReference type="Ensembl" id="ENST00000381530.9">
    <molecule id="Q86SE8-2"/>
    <property type="protein sequence ID" value="ENSP00000370941.5"/>
    <property type="gene ID" value="ENSG00000158806.14"/>
</dbReference>
<dbReference type="Ensembl" id="ENST00000397940.5">
    <molecule id="Q86SE8-1"/>
    <property type="protein sequence ID" value="ENSP00000381032.1"/>
    <property type="gene ID" value="ENSG00000158806.14"/>
</dbReference>
<dbReference type="Ensembl" id="ENST00000518119.6">
    <molecule id="Q86SE8-1"/>
    <property type="protein sequence ID" value="ENSP00000427741.1"/>
    <property type="gene ID" value="ENSG00000158806.14"/>
</dbReference>
<dbReference type="Ensembl" id="ENST00000521157.5">
    <molecule id="Q86SE8-1"/>
    <property type="protein sequence ID" value="ENSP00000429413.1"/>
    <property type="gene ID" value="ENSG00000158806.14"/>
</dbReference>
<dbReference type="Ensembl" id="ENST00000615914.1">
    <molecule id="Q86SE8-2"/>
    <property type="protein sequence ID" value="ENSP00000481018.1"/>
    <property type="gene ID" value="ENSG00000158806.14"/>
</dbReference>
<dbReference type="Ensembl" id="ENST00000621538.4">
    <molecule id="Q86SE8-1"/>
    <property type="protein sequence ID" value="ENSP00000481077.1"/>
    <property type="gene ID" value="ENSG00000158806.14"/>
</dbReference>
<dbReference type="GeneID" id="10361"/>
<dbReference type="KEGG" id="hsa:10361"/>
<dbReference type="MANE-Select" id="ENST00000518119.6">
    <property type="protein sequence ID" value="ENSP00000427741.1"/>
    <property type="RefSeq nucleotide sequence ID" value="NM_001286680.2"/>
    <property type="RefSeq protein sequence ID" value="NP_001273609.1"/>
</dbReference>
<dbReference type="UCSC" id="uc003xac.5">
    <molecule id="Q86SE8-1"/>
    <property type="organism name" value="human"/>
</dbReference>
<dbReference type="AGR" id="HGNC:7930"/>
<dbReference type="CTD" id="10361"/>
<dbReference type="DisGeNET" id="10361"/>
<dbReference type="GeneCards" id="NPM2"/>
<dbReference type="HGNC" id="HGNC:7930">
    <property type="gene designation" value="NPM2"/>
</dbReference>
<dbReference type="HPA" id="ENSG00000158806">
    <property type="expression patterns" value="Tissue enhanced (brain, parathyroid gland)"/>
</dbReference>
<dbReference type="MIM" id="608073">
    <property type="type" value="gene"/>
</dbReference>
<dbReference type="neXtProt" id="NX_Q86SE8"/>
<dbReference type="OpenTargets" id="ENSG00000158806"/>
<dbReference type="PharmGKB" id="PA31732"/>
<dbReference type="VEuPathDB" id="HostDB:ENSG00000158806"/>
<dbReference type="eggNOG" id="ENOG502S0N8">
    <property type="taxonomic scope" value="Eukaryota"/>
</dbReference>
<dbReference type="GeneTree" id="ENSGT00940000161418"/>
<dbReference type="HOGENOM" id="CLU_058838_2_0_1"/>
<dbReference type="InParanoid" id="Q86SE8"/>
<dbReference type="OMA" id="GQECYES"/>
<dbReference type="OrthoDB" id="6075101at2759"/>
<dbReference type="PAN-GO" id="Q86SE8">
    <property type="GO annotations" value="8 GO annotations based on evolutionary models"/>
</dbReference>
<dbReference type="PhylomeDB" id="Q86SE8"/>
<dbReference type="TreeFam" id="TF327704"/>
<dbReference type="PathwayCommons" id="Q86SE8"/>
<dbReference type="Reactome" id="R-HSA-9821993">
    <property type="pathway name" value="Replacement of protamines by nucleosomes in the male pronucleus"/>
</dbReference>
<dbReference type="SignaLink" id="Q86SE8"/>
<dbReference type="BioGRID-ORCS" id="10361">
    <property type="hits" value="10 hits in 1148 CRISPR screens"/>
</dbReference>
<dbReference type="CD-CODE" id="91857CE7">
    <property type="entry name" value="Nucleolus"/>
</dbReference>
<dbReference type="ChiTaRS" id="NPM2">
    <property type="organism name" value="human"/>
</dbReference>
<dbReference type="EvolutionaryTrace" id="Q86SE8"/>
<dbReference type="GenomeRNAi" id="10361"/>
<dbReference type="Pharos" id="Q86SE8">
    <property type="development level" value="Tbio"/>
</dbReference>
<dbReference type="PRO" id="PR:Q86SE8"/>
<dbReference type="Proteomes" id="UP000005640">
    <property type="component" value="Chromosome 8"/>
</dbReference>
<dbReference type="RNAct" id="Q86SE8">
    <property type="molecule type" value="protein"/>
</dbReference>
<dbReference type="Bgee" id="ENSG00000158806">
    <property type="expression patterns" value="Expressed in male germ line stem cell (sensu Vertebrata) in testis and 176 other cell types or tissues"/>
</dbReference>
<dbReference type="ExpressionAtlas" id="Q86SE8">
    <property type="expression patterns" value="baseline and differential"/>
</dbReference>
<dbReference type="GO" id="GO:0000785">
    <property type="term" value="C:chromatin"/>
    <property type="evidence" value="ECO:0000314"/>
    <property type="project" value="UniProtKB"/>
</dbReference>
<dbReference type="GO" id="GO:0005737">
    <property type="term" value="C:cytoplasm"/>
    <property type="evidence" value="ECO:0000318"/>
    <property type="project" value="GO_Central"/>
</dbReference>
<dbReference type="GO" id="GO:0005730">
    <property type="term" value="C:nucleolus"/>
    <property type="evidence" value="ECO:0000318"/>
    <property type="project" value="GO_Central"/>
</dbReference>
<dbReference type="GO" id="GO:0005654">
    <property type="term" value="C:nucleoplasm"/>
    <property type="evidence" value="ECO:0000318"/>
    <property type="project" value="GO_Central"/>
</dbReference>
<dbReference type="GO" id="GO:0005634">
    <property type="term" value="C:nucleus"/>
    <property type="evidence" value="ECO:0000314"/>
    <property type="project" value="UniProtKB"/>
</dbReference>
<dbReference type="GO" id="GO:0003682">
    <property type="term" value="F:chromatin binding"/>
    <property type="evidence" value="ECO:0000318"/>
    <property type="project" value="GO_Central"/>
</dbReference>
<dbReference type="GO" id="GO:0019899">
    <property type="term" value="F:enzyme binding"/>
    <property type="evidence" value="ECO:0007669"/>
    <property type="project" value="Ensembl"/>
</dbReference>
<dbReference type="GO" id="GO:0042393">
    <property type="term" value="F:histone binding"/>
    <property type="evidence" value="ECO:0000318"/>
    <property type="project" value="GO_Central"/>
</dbReference>
<dbReference type="GO" id="GO:0042802">
    <property type="term" value="F:identical protein binding"/>
    <property type="evidence" value="ECO:0007669"/>
    <property type="project" value="Ensembl"/>
</dbReference>
<dbReference type="GO" id="GO:0003723">
    <property type="term" value="F:RNA binding"/>
    <property type="evidence" value="ECO:0000318"/>
    <property type="project" value="GO_Central"/>
</dbReference>
<dbReference type="GO" id="GO:0001824">
    <property type="term" value="P:blastocyst development"/>
    <property type="evidence" value="ECO:0000315"/>
    <property type="project" value="UniProtKB"/>
</dbReference>
<dbReference type="GO" id="GO:0006338">
    <property type="term" value="P:chromatin remodeling"/>
    <property type="evidence" value="ECO:0000314"/>
    <property type="project" value="UniProtKB"/>
</dbReference>
<dbReference type="GO" id="GO:0009994">
    <property type="term" value="P:oocyte differentiation"/>
    <property type="evidence" value="ECO:0000270"/>
    <property type="project" value="UniProtKB"/>
</dbReference>
<dbReference type="GO" id="GO:0045740">
    <property type="term" value="P:positive regulation of DNA replication"/>
    <property type="evidence" value="ECO:0000318"/>
    <property type="project" value="GO_Central"/>
</dbReference>
<dbReference type="GO" id="GO:0045836">
    <property type="term" value="P:positive regulation of meiotic nuclear division"/>
    <property type="evidence" value="ECO:0000315"/>
    <property type="project" value="UniProtKB"/>
</dbReference>
<dbReference type="GO" id="GO:0007096">
    <property type="term" value="P:regulation of exit from mitosis"/>
    <property type="evidence" value="ECO:0000315"/>
    <property type="project" value="UniProtKB"/>
</dbReference>
<dbReference type="GO" id="GO:0007338">
    <property type="term" value="P:single fertilization"/>
    <property type="evidence" value="ECO:0000315"/>
    <property type="project" value="UniProtKB"/>
</dbReference>
<dbReference type="FunFam" id="2.60.120.340:FF:000003">
    <property type="entry name" value="Nucleoplasmin 2"/>
    <property type="match status" value="1"/>
</dbReference>
<dbReference type="Gene3D" id="2.60.120.340">
    <property type="entry name" value="Nucleoplasmin core domain"/>
    <property type="match status" value="1"/>
</dbReference>
<dbReference type="InterPro" id="IPR004301">
    <property type="entry name" value="Nucleoplasmin"/>
</dbReference>
<dbReference type="InterPro" id="IPR024057">
    <property type="entry name" value="Nucleoplasmin_core_dom"/>
</dbReference>
<dbReference type="InterPro" id="IPR036824">
    <property type="entry name" value="Nucleoplasmin_core_dom_sf"/>
</dbReference>
<dbReference type="PANTHER" id="PTHR22747">
    <property type="entry name" value="NUCLEOPLASMIN"/>
    <property type="match status" value="1"/>
</dbReference>
<dbReference type="PANTHER" id="PTHR22747:SF14">
    <property type="entry name" value="NUCLEOPLASMIN-2"/>
    <property type="match status" value="1"/>
</dbReference>
<dbReference type="Pfam" id="PF03066">
    <property type="entry name" value="Nucleoplasmin"/>
    <property type="match status" value="1"/>
</dbReference>
<dbReference type="SUPFAM" id="SSF69203">
    <property type="entry name" value="Nucleoplasmin-like core domain"/>
    <property type="match status" value="1"/>
</dbReference>
<feature type="chain" id="PRO_0000219487" description="Nucleoplasmin-2">
    <location>
        <begin position="1"/>
        <end position="214"/>
    </location>
</feature>
<feature type="region of interest" description="Disordered" evidence="2">
    <location>
        <begin position="119"/>
        <end position="214"/>
    </location>
</feature>
<feature type="region of interest" description="Acidic tract A2">
    <location>
        <begin position="129"/>
        <end position="152"/>
    </location>
</feature>
<feature type="short sequence motif" description="Bipartite nuclear localization signal" evidence="1">
    <location>
        <begin position="165"/>
        <end position="180"/>
    </location>
</feature>
<feature type="compositionally biased region" description="Acidic residues" evidence="2">
    <location>
        <begin position="127"/>
        <end position="155"/>
    </location>
</feature>
<feature type="compositionally biased region" description="Basic and acidic residues" evidence="2">
    <location>
        <begin position="181"/>
        <end position="197"/>
    </location>
</feature>
<feature type="compositionally biased region" description="Basic residues" evidence="2">
    <location>
        <begin position="198"/>
        <end position="214"/>
    </location>
</feature>
<feature type="site" description="Interaction between pentamers">
    <location>
        <position position="57"/>
    </location>
</feature>
<feature type="site" description="Interaction between pentamers">
    <location>
        <position position="84"/>
    </location>
</feature>
<feature type="splice variant" id="VSP_054261" description="In isoform 2." evidence="4">
    <original>ASDLTWEEEEEEEGEEEEEEEEDDEDEDADISLEEQSPVKQVKRLVPQKQASVAKKKKLEKEEEEIRASVRDKSPVKKAKATARAKKPGFKK</original>
    <variation>KKAGKRRRGNKSQR</variation>
    <location>
        <begin position="123"/>
        <end position="214"/>
    </location>
</feature>
<feature type="strand" evidence="6">
    <location>
        <begin position="16"/>
        <end position="23"/>
    </location>
</feature>
<feature type="strand" evidence="6">
    <location>
        <begin position="29"/>
        <end position="32"/>
    </location>
</feature>
<feature type="strand" evidence="6">
    <location>
        <begin position="43"/>
        <end position="51"/>
    </location>
</feature>
<feature type="strand" evidence="6">
    <location>
        <begin position="60"/>
        <end position="65"/>
    </location>
</feature>
<feature type="strand" evidence="6">
    <location>
        <begin position="78"/>
        <end position="84"/>
    </location>
</feature>
<feature type="turn" evidence="6">
    <location>
        <begin position="85"/>
        <end position="87"/>
    </location>
</feature>
<feature type="strand" evidence="6">
    <location>
        <begin position="90"/>
        <end position="98"/>
    </location>
</feature>
<feature type="strand" evidence="6">
    <location>
        <begin position="100"/>
        <end position="109"/>
    </location>
</feature>
<feature type="strand" evidence="6">
    <location>
        <begin position="113"/>
        <end position="120"/>
    </location>
</feature>
<comment type="function">
    <text evidence="3">Core histones chaperone involved in chromatin reprogramming, specially during fertilization and early embryonic development. Probably involved in sperm DNA decondensation during fertilization.</text>
</comment>
<comment type="subunit">
    <text evidence="3">Homopentamer, when bound to H2A-H2B dimers only. Homodecamer of two stacked pentamers, when bound to H2A-H2B dimers and H3-H4 tetramers simultaneously.</text>
</comment>
<comment type="interaction">
    <interactant intactId="EBI-6658150">
        <id>Q86SE8</id>
    </interactant>
    <interactant intactId="EBI-78579">
        <id>P06748</id>
        <label>NPM1</label>
    </interactant>
    <organismsDiffer>false</organismsDiffer>
    <experiments>8</experiments>
</comment>
<comment type="interaction">
    <interactant intactId="EBI-6658150">
        <id>Q86SE8</id>
    </interactant>
    <interactant intactId="EBI-721544">
        <id>O75607</id>
        <label>NPM3</label>
    </interactant>
    <organismsDiffer>false</organismsDiffer>
    <experiments>6</experiments>
</comment>
<comment type="interaction">
    <interactant intactId="EBI-6658150">
        <id>Q86SE8</id>
    </interactant>
    <interactant intactId="EBI-742388">
        <id>Q9H8W4</id>
        <label>PLEKHF2</label>
    </interactant>
    <organismsDiffer>false</organismsDiffer>
    <experiments>3</experiments>
</comment>
<comment type="interaction">
    <interactant intactId="EBI-6658150">
        <id>Q86SE8</id>
    </interactant>
    <interactant intactId="EBI-742426">
        <id>Q9H190</id>
        <label>SDCBP2</label>
    </interactant>
    <organismsDiffer>false</organismsDiffer>
    <experiments>4</experiments>
</comment>
<comment type="interaction">
    <interactant intactId="EBI-12193061">
        <id>Q86SE8-2</id>
    </interactant>
    <interactant intactId="EBI-78579">
        <id>P06748</id>
        <label>NPM1</label>
    </interactant>
    <organismsDiffer>false</organismsDiffer>
    <experiments>5</experiments>
</comment>
<comment type="interaction">
    <interactant intactId="EBI-12193061">
        <id>Q86SE8-2</id>
    </interactant>
    <interactant intactId="EBI-354154">
        <id>P06748-2</id>
        <label>NPM1</label>
    </interactant>
    <organismsDiffer>false</organismsDiffer>
    <experiments>4</experiments>
</comment>
<comment type="interaction">
    <interactant intactId="EBI-12193061">
        <id>Q86SE8-2</id>
    </interactant>
    <interactant intactId="EBI-745767">
        <id>Q96S99</id>
        <label>PLEKHF1</label>
    </interactant>
    <organismsDiffer>false</organismsDiffer>
    <experiments>3</experiments>
</comment>
<comment type="interaction">
    <interactant intactId="EBI-12193061">
        <id>Q86SE8-2</id>
    </interactant>
    <interactant intactId="EBI-742388">
        <id>Q9H8W4</id>
        <label>PLEKHF2</label>
    </interactant>
    <organismsDiffer>false</organismsDiffer>
    <experiments>3</experiments>
</comment>
<comment type="subcellular location">
    <subcellularLocation>
        <location evidence="1">Nucleus</location>
    </subcellularLocation>
    <text evidence="1">Found in the oocyte nucleus before nuclear membrane breakdown, after which it is redistributed to the cytoplasm.</text>
</comment>
<comment type="alternative products">
    <event type="alternative splicing"/>
    <isoform>
        <id>Q86SE8-1</id>
        <name>1</name>
        <sequence type="displayed"/>
    </isoform>
    <isoform>
        <id>Q86SE8-2</id>
        <name>2</name>
        <sequence type="described" ref="VSP_054261"/>
    </isoform>
</comment>
<comment type="domain">
    <text evidence="3">The acidic tract A2 mediates histone binding.</text>
</comment>
<comment type="similarity">
    <text evidence="5">Belongs to the nucleoplasmin family.</text>
</comment>
<reference key="1">
    <citation type="journal article" date="2003" name="Science">
        <title>Roles of NPM2 in chromatin and nucleolar organization in oocytes and embryos.</title>
        <authorList>
            <person name="Burns K.H."/>
            <person name="Viveiros M.M."/>
            <person name="Ren Y."/>
            <person name="Wang P."/>
            <person name="DeMayo F.J."/>
            <person name="Frail D.E."/>
            <person name="Eppig J.J."/>
            <person name="Matzuk M.M."/>
        </authorList>
    </citation>
    <scope>NUCLEOTIDE SEQUENCE [MRNA] (ISOFORM 1)</scope>
</reference>
<reference key="2">
    <citation type="journal article" date="2004" name="Nat. Genet.">
        <title>Complete sequencing and characterization of 21,243 full-length human cDNAs.</title>
        <authorList>
            <person name="Ota T."/>
            <person name="Suzuki Y."/>
            <person name="Nishikawa T."/>
            <person name="Otsuki T."/>
            <person name="Sugiyama T."/>
            <person name="Irie R."/>
            <person name="Wakamatsu A."/>
            <person name="Hayashi K."/>
            <person name="Sato H."/>
            <person name="Nagai K."/>
            <person name="Kimura K."/>
            <person name="Makita H."/>
            <person name="Sekine M."/>
            <person name="Obayashi M."/>
            <person name="Nishi T."/>
            <person name="Shibahara T."/>
            <person name="Tanaka T."/>
            <person name="Ishii S."/>
            <person name="Yamamoto J."/>
            <person name="Saito K."/>
            <person name="Kawai Y."/>
            <person name="Isono Y."/>
            <person name="Nakamura Y."/>
            <person name="Nagahari K."/>
            <person name="Murakami K."/>
            <person name="Yasuda T."/>
            <person name="Iwayanagi T."/>
            <person name="Wagatsuma M."/>
            <person name="Shiratori A."/>
            <person name="Sudo H."/>
            <person name="Hosoiri T."/>
            <person name="Kaku Y."/>
            <person name="Kodaira H."/>
            <person name="Kondo H."/>
            <person name="Sugawara M."/>
            <person name="Takahashi M."/>
            <person name="Kanda K."/>
            <person name="Yokoi T."/>
            <person name="Furuya T."/>
            <person name="Kikkawa E."/>
            <person name="Omura Y."/>
            <person name="Abe K."/>
            <person name="Kamihara K."/>
            <person name="Katsuta N."/>
            <person name="Sato K."/>
            <person name="Tanikawa M."/>
            <person name="Yamazaki M."/>
            <person name="Ninomiya K."/>
            <person name="Ishibashi T."/>
            <person name="Yamashita H."/>
            <person name="Murakawa K."/>
            <person name="Fujimori K."/>
            <person name="Tanai H."/>
            <person name="Kimata M."/>
            <person name="Watanabe M."/>
            <person name="Hiraoka S."/>
            <person name="Chiba Y."/>
            <person name="Ishida S."/>
            <person name="Ono Y."/>
            <person name="Takiguchi S."/>
            <person name="Watanabe S."/>
            <person name="Yosida M."/>
            <person name="Hotuta T."/>
            <person name="Kusano J."/>
            <person name="Kanehori K."/>
            <person name="Takahashi-Fujii A."/>
            <person name="Hara H."/>
            <person name="Tanase T.-O."/>
            <person name="Nomura Y."/>
            <person name="Togiya S."/>
            <person name="Komai F."/>
            <person name="Hara R."/>
            <person name="Takeuchi K."/>
            <person name="Arita M."/>
            <person name="Imose N."/>
            <person name="Musashino K."/>
            <person name="Yuuki H."/>
            <person name="Oshima A."/>
            <person name="Sasaki N."/>
            <person name="Aotsuka S."/>
            <person name="Yoshikawa Y."/>
            <person name="Matsunawa H."/>
            <person name="Ichihara T."/>
            <person name="Shiohata N."/>
            <person name="Sano S."/>
            <person name="Moriya S."/>
            <person name="Momiyama H."/>
            <person name="Satoh N."/>
            <person name="Takami S."/>
            <person name="Terashima Y."/>
            <person name="Suzuki O."/>
            <person name="Nakagawa S."/>
            <person name="Senoh A."/>
            <person name="Mizoguchi H."/>
            <person name="Goto Y."/>
            <person name="Shimizu F."/>
            <person name="Wakebe H."/>
            <person name="Hishigaki H."/>
            <person name="Watanabe T."/>
            <person name="Sugiyama A."/>
            <person name="Takemoto M."/>
            <person name="Kawakami B."/>
            <person name="Yamazaki M."/>
            <person name="Watanabe K."/>
            <person name="Kumagai A."/>
            <person name="Itakura S."/>
            <person name="Fukuzumi Y."/>
            <person name="Fujimori Y."/>
            <person name="Komiyama M."/>
            <person name="Tashiro H."/>
            <person name="Tanigami A."/>
            <person name="Fujiwara T."/>
            <person name="Ono T."/>
            <person name="Yamada K."/>
            <person name="Fujii Y."/>
            <person name="Ozaki K."/>
            <person name="Hirao M."/>
            <person name="Ohmori Y."/>
            <person name="Kawabata A."/>
            <person name="Hikiji T."/>
            <person name="Kobatake N."/>
            <person name="Inagaki H."/>
            <person name="Ikema Y."/>
            <person name="Okamoto S."/>
            <person name="Okitani R."/>
            <person name="Kawakami T."/>
            <person name="Noguchi S."/>
            <person name="Itoh T."/>
            <person name="Shigeta K."/>
            <person name="Senba T."/>
            <person name="Matsumura K."/>
            <person name="Nakajima Y."/>
            <person name="Mizuno T."/>
            <person name="Morinaga M."/>
            <person name="Sasaki M."/>
            <person name="Togashi T."/>
            <person name="Oyama M."/>
            <person name="Hata H."/>
            <person name="Watanabe M."/>
            <person name="Komatsu T."/>
            <person name="Mizushima-Sugano J."/>
            <person name="Satoh T."/>
            <person name="Shirai Y."/>
            <person name="Takahashi Y."/>
            <person name="Nakagawa K."/>
            <person name="Okumura K."/>
            <person name="Nagase T."/>
            <person name="Nomura N."/>
            <person name="Kikuchi H."/>
            <person name="Masuho Y."/>
            <person name="Yamashita R."/>
            <person name="Nakai K."/>
            <person name="Yada T."/>
            <person name="Nakamura Y."/>
            <person name="Ohara O."/>
            <person name="Isogai T."/>
            <person name="Sugano S."/>
        </authorList>
    </citation>
    <scope>NUCLEOTIDE SEQUENCE [LARGE SCALE MRNA] (ISOFORM 1)</scope>
    <source>
        <tissue>Cerebellum</tissue>
    </source>
</reference>
<reference key="3">
    <citation type="journal article" date="2006" name="Nature">
        <title>DNA sequence and analysis of human chromosome 8.</title>
        <authorList>
            <person name="Nusbaum C."/>
            <person name="Mikkelsen T.S."/>
            <person name="Zody M.C."/>
            <person name="Asakawa S."/>
            <person name="Taudien S."/>
            <person name="Garber M."/>
            <person name="Kodira C.D."/>
            <person name="Schueler M.G."/>
            <person name="Shimizu A."/>
            <person name="Whittaker C.A."/>
            <person name="Chang J.L."/>
            <person name="Cuomo C.A."/>
            <person name="Dewar K."/>
            <person name="FitzGerald M.G."/>
            <person name="Yang X."/>
            <person name="Allen N.R."/>
            <person name="Anderson S."/>
            <person name="Asakawa T."/>
            <person name="Blechschmidt K."/>
            <person name="Bloom T."/>
            <person name="Borowsky M.L."/>
            <person name="Butler J."/>
            <person name="Cook A."/>
            <person name="Corum B."/>
            <person name="DeArellano K."/>
            <person name="DeCaprio D."/>
            <person name="Dooley K.T."/>
            <person name="Dorris L. III"/>
            <person name="Engels R."/>
            <person name="Gloeckner G."/>
            <person name="Hafez N."/>
            <person name="Hagopian D.S."/>
            <person name="Hall J.L."/>
            <person name="Ishikawa S.K."/>
            <person name="Jaffe D.B."/>
            <person name="Kamat A."/>
            <person name="Kudoh J."/>
            <person name="Lehmann R."/>
            <person name="Lokitsang T."/>
            <person name="Macdonald P."/>
            <person name="Major J.E."/>
            <person name="Matthews C.D."/>
            <person name="Mauceli E."/>
            <person name="Menzel U."/>
            <person name="Mihalev A.H."/>
            <person name="Minoshima S."/>
            <person name="Murayama Y."/>
            <person name="Naylor J.W."/>
            <person name="Nicol R."/>
            <person name="Nguyen C."/>
            <person name="O'Leary S.B."/>
            <person name="O'Neill K."/>
            <person name="Parker S.C.J."/>
            <person name="Polley A."/>
            <person name="Raymond C.K."/>
            <person name="Reichwald K."/>
            <person name="Rodriguez J."/>
            <person name="Sasaki T."/>
            <person name="Schilhabel M."/>
            <person name="Siddiqui R."/>
            <person name="Smith C.L."/>
            <person name="Sneddon T.P."/>
            <person name="Talamas J.A."/>
            <person name="Tenzin P."/>
            <person name="Topham K."/>
            <person name="Venkataraman V."/>
            <person name="Wen G."/>
            <person name="Yamazaki S."/>
            <person name="Young S.K."/>
            <person name="Zeng Q."/>
            <person name="Zimmer A.R."/>
            <person name="Rosenthal A."/>
            <person name="Birren B.W."/>
            <person name="Platzer M."/>
            <person name="Shimizu N."/>
            <person name="Lander E.S."/>
        </authorList>
    </citation>
    <scope>NUCLEOTIDE SEQUENCE [LARGE SCALE GENOMIC DNA]</scope>
</reference>
<reference key="4">
    <citation type="submission" date="2005-09" db="EMBL/GenBank/DDBJ databases">
        <authorList>
            <person name="Mural R.J."/>
            <person name="Istrail S."/>
            <person name="Sutton G.G."/>
            <person name="Florea L."/>
            <person name="Halpern A.L."/>
            <person name="Mobarry C.M."/>
            <person name="Lippert R."/>
            <person name="Walenz B."/>
            <person name="Shatkay H."/>
            <person name="Dew I."/>
            <person name="Miller J.R."/>
            <person name="Flanigan M.J."/>
            <person name="Edwards N.J."/>
            <person name="Bolanos R."/>
            <person name="Fasulo D."/>
            <person name="Halldorsson B.V."/>
            <person name="Hannenhalli S."/>
            <person name="Turner R."/>
            <person name="Yooseph S."/>
            <person name="Lu F."/>
            <person name="Nusskern D.R."/>
            <person name="Shue B.C."/>
            <person name="Zheng X.H."/>
            <person name="Zhong F."/>
            <person name="Delcher A.L."/>
            <person name="Huson D.H."/>
            <person name="Kravitz S.A."/>
            <person name="Mouchard L."/>
            <person name="Reinert K."/>
            <person name="Remington K.A."/>
            <person name="Clark A.G."/>
            <person name="Waterman M.S."/>
            <person name="Eichler E.E."/>
            <person name="Adams M.D."/>
            <person name="Hunkapiller M.W."/>
            <person name="Myers E.W."/>
            <person name="Venter J.C."/>
        </authorList>
    </citation>
    <scope>NUCLEOTIDE SEQUENCE [LARGE SCALE GENOMIC DNA]</scope>
</reference>
<reference key="5">
    <citation type="journal article" date="2004" name="Genome Res.">
        <title>The status, quality, and expansion of the NIH full-length cDNA project: the Mammalian Gene Collection (MGC).</title>
        <authorList>
            <consortium name="The MGC Project Team"/>
        </authorList>
    </citation>
    <scope>NUCLEOTIDE SEQUENCE [LARGE SCALE MRNA] (ISOFORM 2)</scope>
    <source>
        <tissue>Skin</tissue>
    </source>
</reference>
<reference key="6">
    <citation type="journal article" date="2007" name="Bioessays">
        <title>New insights into the nucleophosmin/nucleoplasmin family of nuclear chaperones.</title>
        <authorList>
            <person name="Frehlick L.J."/>
            <person name="Eirin-Lopez J.M."/>
            <person name="Ausio J."/>
        </authorList>
    </citation>
    <scope>REVIEW ON FUNCTION</scope>
</reference>
<reference key="7">
    <citation type="journal article" date="2011" name="Biochemistry">
        <title>Crystal structure and function of human nucleoplasmin (npm2): a histone chaperone in oocytes and embryos.</title>
        <authorList>
            <person name="Platonova O."/>
            <person name="Akey I.V."/>
            <person name="Head J.F."/>
            <person name="Akey C.W."/>
        </authorList>
    </citation>
    <scope>X-RAY CRYSTALLOGRAPHY (1.9 ANGSTROMS) OF 14-122</scope>
    <scope>FUNCTION</scope>
    <scope>DOMAIN</scope>
    <scope>SUBUNIT</scope>
</reference>
<evidence type="ECO:0000250" key="1"/>
<evidence type="ECO:0000256" key="2">
    <source>
        <dbReference type="SAM" id="MobiDB-lite"/>
    </source>
</evidence>
<evidence type="ECO:0000269" key="3">
    <source>
    </source>
</evidence>
<evidence type="ECO:0000303" key="4">
    <source>
    </source>
</evidence>
<evidence type="ECO:0000305" key="5"/>
<evidence type="ECO:0007829" key="6">
    <source>
        <dbReference type="PDB" id="3T30"/>
    </source>
</evidence>
<accession>Q86SE8</accession>
<accession>B3KSU0</accession>
<accession>D3DSQ8</accession>
<accession>Q6NVH6</accession>
<name>NPM2_HUMAN</name>